<organism>
    <name type="scientific">Felis catus</name>
    <name type="common">Cat</name>
    <name type="synonym">Felis silvestris catus</name>
    <dbReference type="NCBI Taxonomy" id="9685"/>
    <lineage>
        <taxon>Eukaryota</taxon>
        <taxon>Metazoa</taxon>
        <taxon>Chordata</taxon>
        <taxon>Craniata</taxon>
        <taxon>Vertebrata</taxon>
        <taxon>Euteleostomi</taxon>
        <taxon>Mammalia</taxon>
        <taxon>Eutheria</taxon>
        <taxon>Laurasiatheria</taxon>
        <taxon>Carnivora</taxon>
        <taxon>Feliformia</taxon>
        <taxon>Felidae</taxon>
        <taxon>Felinae</taxon>
        <taxon>Felis</taxon>
    </lineage>
</organism>
<reference key="1">
    <citation type="submission" date="1999-10" db="EMBL/GenBank/DDBJ databases">
        <title>Felis domesticus beta adrenergic receptor subtype 1.</title>
        <authorList>
            <person name="Cully D.F."/>
            <person name="Tremml G."/>
            <person name="Zachwieja S."/>
        </authorList>
    </citation>
    <scope>NUCLEOTIDE SEQUENCE [GENOMIC DNA]</scope>
</reference>
<comment type="function">
    <text evidence="2 4">Beta-adrenergic receptors mediate the catecholamine-induced activation of adenylate cyclase through the action of G proteins. This receptor binds epinephrine and norepinephrine with approximately equal affinity. Mediates Ras activation through G(s)-alpha- and cAMP-mediated signaling (By similarity). Involved in the regulation of sleep/wake behaviors (By similarity).</text>
</comment>
<comment type="subunit">
    <text evidence="2">Interacts (via C-terminus PDZ motif) with RAPGEF2; the interaction is direct. Interacts with GOPC, MAGI3 and DLG4 (By similarity).</text>
</comment>
<comment type="subcellular location">
    <subcellularLocation>
        <location evidence="3">Cell membrane</location>
        <topology evidence="3">Multi-pass membrane protein</topology>
    </subcellularLocation>
    <subcellularLocation>
        <location evidence="1">Early endosome</location>
    </subcellularLocation>
    <text evidence="1">Colocalizes with RAPGEF2 at the plasma membrane. Found in the Golgi upon GOPC overexpression (By similarity).</text>
</comment>
<comment type="domain">
    <text evidence="1">The PDZ domain-binding motif mediates competitive interactions with GOPC, MAGI3 and DLG4 and plays a role in subcellular location of the receptor.</text>
</comment>
<comment type="PTM">
    <text evidence="1">Homologous desensitization of the receptor is mediated by its phosphorylation by beta-adrenergic receptor kinase.</text>
</comment>
<comment type="similarity">
    <text evidence="6">Belongs to the G-protein coupled receptor 1 family. Adrenergic receptor subfamily. ADRB1 sub-subfamily.</text>
</comment>
<proteinExistence type="inferred from homology"/>
<gene>
    <name type="primary">ADRB1</name>
</gene>
<keyword id="KW-1003">Cell membrane</keyword>
<keyword id="KW-1015">Disulfide bond</keyword>
<keyword id="KW-0967">Endosome</keyword>
<keyword id="KW-0297">G-protein coupled receptor</keyword>
<keyword id="KW-0325">Glycoprotein</keyword>
<keyword id="KW-0449">Lipoprotein</keyword>
<keyword id="KW-0472">Membrane</keyword>
<keyword id="KW-0564">Palmitate</keyword>
<keyword id="KW-0597">Phosphoprotein</keyword>
<keyword id="KW-0675">Receptor</keyword>
<keyword id="KW-1185">Reference proteome</keyword>
<keyword id="KW-0807">Transducer</keyword>
<keyword id="KW-0812">Transmembrane</keyword>
<keyword id="KW-1133">Transmembrane helix</keyword>
<name>ADRB1_FELCA</name>
<accession>Q9TST6</accession>
<sequence length="474" mass="50533">MGAGALALGASEPCNLSSAAPLPDGAATAARLLVPASPSASPLTPTSEGPAPLSQQWTAGIGLLMALIVLLIVAGNVLVIVAIAKTPRLQTLTNLFIMSLASADLVMGLLVVPFGATIVMRGRWEYGSFFCELWTSVDVLCVTASIETLCVIALDRYLAITSPFRYQSLLTRARARALVCTVWAISALVSFLPILMHWWRAEGDEARRCYNDPKCCDFVTNRAYAIASSVVSFYVPLCIMAFVYLRVFREAQKQVKKIDSCERRFLSGPARPPSPAPAPGSPRPAATAAAAAAAAPLANGRISKRRPSRLVALREQKALKTLGIIMGVFTLCWLPFFLANVVKAFHRDLVPDRLFVFFNWLGYANSAFNPIIYCRSPDFRKAFQRLLCFARRAARGGHAAAGDRPRASGCLPGTRPPPSPGAASDEDDDDDVGAAPPARLLEPWAGCNGGAAAADSDSSLDEPGRPAGASESKV</sequence>
<protein>
    <recommendedName>
        <fullName>Beta-1 adrenergic receptor</fullName>
    </recommendedName>
    <alternativeName>
        <fullName>Beta-1 adrenoreceptor</fullName>
        <shortName>Beta-1 adrenoceptor</shortName>
    </alternativeName>
</protein>
<feature type="chain" id="PRO_0000069117" description="Beta-1 adrenergic receptor">
    <location>
        <begin position="1"/>
        <end position="474"/>
    </location>
</feature>
<feature type="topological domain" description="Extracellular" evidence="1">
    <location>
        <begin position="1"/>
        <end position="55"/>
    </location>
</feature>
<feature type="transmembrane region" description="Helical; Name=1" evidence="1">
    <location>
        <begin position="56"/>
        <end position="84"/>
    </location>
</feature>
<feature type="topological domain" description="Cytoplasmic" evidence="1">
    <location>
        <begin position="85"/>
        <end position="93"/>
    </location>
</feature>
<feature type="transmembrane region" description="Helical; Name=2" evidence="1">
    <location>
        <begin position="94"/>
        <end position="120"/>
    </location>
</feature>
<feature type="topological domain" description="Extracellular" evidence="1">
    <location>
        <begin position="121"/>
        <end position="132"/>
    </location>
</feature>
<feature type="transmembrane region" description="Helical; Name=3" evidence="1">
    <location>
        <begin position="133"/>
        <end position="154"/>
    </location>
</feature>
<feature type="topological domain" description="Cytoplasmic" evidence="1">
    <location>
        <begin position="155"/>
        <end position="172"/>
    </location>
</feature>
<feature type="transmembrane region" description="Helical; Name=4" evidence="1">
    <location>
        <begin position="173"/>
        <end position="196"/>
    </location>
</feature>
<feature type="topological domain" description="Extracellular" evidence="1">
    <location>
        <begin position="197"/>
        <end position="222"/>
    </location>
</feature>
<feature type="transmembrane region" description="Helical; Name=5" evidence="1">
    <location>
        <begin position="223"/>
        <end position="248"/>
    </location>
</feature>
<feature type="topological domain" description="Cytoplasmic" evidence="1">
    <location>
        <begin position="249"/>
        <end position="315"/>
    </location>
</feature>
<feature type="transmembrane region" description="Helical; Name=6" evidence="1">
    <location>
        <begin position="316"/>
        <end position="345"/>
    </location>
</feature>
<feature type="topological domain" description="Extracellular" evidence="1">
    <location>
        <begin position="346"/>
        <end position="350"/>
    </location>
</feature>
<feature type="transmembrane region" description="Helical; Name=7" evidence="1">
    <location>
        <begin position="351"/>
        <end position="373"/>
    </location>
</feature>
<feature type="topological domain" description="Cytoplasmic" evidence="1">
    <location>
        <begin position="374"/>
        <end position="474"/>
    </location>
</feature>
<feature type="region of interest" description="Disordered" evidence="7">
    <location>
        <begin position="399"/>
        <end position="474"/>
    </location>
</feature>
<feature type="short sequence motif" description="PDZ-Binding" evidence="1">
    <location>
        <begin position="471"/>
        <end position="474"/>
    </location>
</feature>
<feature type="modified residue" description="Phosphoserine; by PKA" evidence="5">
    <location>
        <position position="308"/>
    </location>
</feature>
<feature type="modified residue" description="Phosphoserine" evidence="3">
    <location>
        <position position="424"/>
    </location>
</feature>
<feature type="lipid moiety-binding region" description="S-palmitoyl cysteine" evidence="1">
    <location>
        <position position="388"/>
    </location>
</feature>
<feature type="glycosylation site" description="N-linked (GlcNAc...) asparagine" evidence="8">
    <location>
        <position position="15"/>
    </location>
</feature>
<feature type="disulfide bond" evidence="6">
    <location>
        <begin position="131"/>
        <end position="216"/>
    </location>
</feature>
<feature type="disulfide bond" evidence="6">
    <location>
        <begin position="209"/>
        <end position="215"/>
    </location>
</feature>
<dbReference type="EMBL" id="AF192344">
    <property type="protein sequence ID" value="AAF04303.1"/>
    <property type="molecule type" value="Genomic_DNA"/>
</dbReference>
<dbReference type="RefSeq" id="NP_001009375.1">
    <property type="nucleotide sequence ID" value="NM_001009375.1"/>
</dbReference>
<dbReference type="SMR" id="Q9TST6"/>
<dbReference type="FunCoup" id="Q9TST6">
    <property type="interactions" value="41"/>
</dbReference>
<dbReference type="STRING" id="9685.ENSFCAP00000042036"/>
<dbReference type="GlyCosmos" id="Q9TST6">
    <property type="glycosylation" value="1 site, No reported glycans"/>
</dbReference>
<dbReference type="Ensembl" id="ENSFCAT00000053422.1">
    <property type="protein sequence ID" value="ENSFCAP00000042036.1"/>
    <property type="gene ID" value="ENSFCAG00000045161.1"/>
</dbReference>
<dbReference type="GeneID" id="493971"/>
<dbReference type="KEGG" id="fca:493971"/>
<dbReference type="CTD" id="153"/>
<dbReference type="VGNC" id="VGNC:109579">
    <property type="gene designation" value="ADRB1"/>
</dbReference>
<dbReference type="GeneTree" id="ENSGT00940000161953"/>
<dbReference type="InParanoid" id="Q9TST6"/>
<dbReference type="OMA" id="AGTWSDC"/>
<dbReference type="OrthoDB" id="5975661at2759"/>
<dbReference type="Proteomes" id="UP000011712">
    <property type="component" value="Chromosome D2"/>
</dbReference>
<dbReference type="Bgee" id="ENSFCAG00000045161">
    <property type="expression patterns" value="Expressed in prefrontal cortex and 10 other cell types or tissues"/>
</dbReference>
<dbReference type="GO" id="GO:0005769">
    <property type="term" value="C:early endosome"/>
    <property type="evidence" value="ECO:0000250"/>
    <property type="project" value="UniProtKB"/>
</dbReference>
<dbReference type="GO" id="GO:0098992">
    <property type="term" value="C:neuronal dense core vesicle"/>
    <property type="evidence" value="ECO:0007669"/>
    <property type="project" value="Ensembl"/>
</dbReference>
<dbReference type="GO" id="GO:0005886">
    <property type="term" value="C:plasma membrane"/>
    <property type="evidence" value="ECO:0000250"/>
    <property type="project" value="UniProtKB"/>
</dbReference>
<dbReference type="GO" id="GO:0098685">
    <property type="term" value="C:Schaffer collateral - CA1 synapse"/>
    <property type="evidence" value="ECO:0007669"/>
    <property type="project" value="Ensembl"/>
</dbReference>
<dbReference type="GO" id="GO:0031694">
    <property type="term" value="F:alpha-2A adrenergic receptor binding"/>
    <property type="evidence" value="ECO:0007669"/>
    <property type="project" value="Ensembl"/>
</dbReference>
<dbReference type="GO" id="GO:0004940">
    <property type="term" value="F:beta1-adrenergic receptor activity"/>
    <property type="evidence" value="ECO:0000250"/>
    <property type="project" value="UniProtKB"/>
</dbReference>
<dbReference type="GO" id="GO:0099579">
    <property type="term" value="F:G protein-coupled neurotransmitter receptor activity involved in regulation of postsynaptic membrane potential"/>
    <property type="evidence" value="ECO:0007669"/>
    <property type="project" value="Ensembl"/>
</dbReference>
<dbReference type="GO" id="GO:0030165">
    <property type="term" value="F:PDZ domain binding"/>
    <property type="evidence" value="ECO:0007669"/>
    <property type="project" value="Ensembl"/>
</dbReference>
<dbReference type="GO" id="GO:0046982">
    <property type="term" value="F:protein heterodimerization activity"/>
    <property type="evidence" value="ECO:0007669"/>
    <property type="project" value="Ensembl"/>
</dbReference>
<dbReference type="GO" id="GO:0071880">
    <property type="term" value="P:adenylate cyclase-activating adrenergic receptor signaling pathway"/>
    <property type="evidence" value="ECO:0000250"/>
    <property type="project" value="UniProtKB"/>
</dbReference>
<dbReference type="GO" id="GO:0050873">
    <property type="term" value="P:brown fat cell differentiation"/>
    <property type="evidence" value="ECO:0007669"/>
    <property type="project" value="Ensembl"/>
</dbReference>
<dbReference type="GO" id="GO:0002024">
    <property type="term" value="P:diet induced thermogenesis"/>
    <property type="evidence" value="ECO:0007669"/>
    <property type="project" value="Ensembl"/>
</dbReference>
<dbReference type="GO" id="GO:0042596">
    <property type="term" value="P:fear response"/>
    <property type="evidence" value="ECO:0007669"/>
    <property type="project" value="Ensembl"/>
</dbReference>
<dbReference type="GO" id="GO:0031649">
    <property type="term" value="P:heat generation"/>
    <property type="evidence" value="ECO:0007669"/>
    <property type="project" value="Ensembl"/>
</dbReference>
<dbReference type="GO" id="GO:0040015">
    <property type="term" value="P:negative regulation of multicellular organism growth"/>
    <property type="evidence" value="ECO:0007669"/>
    <property type="project" value="Ensembl"/>
</dbReference>
<dbReference type="GO" id="GO:0002025">
    <property type="term" value="P:norepinephrine-epinephrine-mediated vasodilation involved in regulation of systemic arterial blood pressure"/>
    <property type="evidence" value="ECO:0000318"/>
    <property type="project" value="GO_Central"/>
</dbReference>
<dbReference type="GO" id="GO:0120162">
    <property type="term" value="P:positive regulation of cold-induced thermogenesis"/>
    <property type="evidence" value="ECO:0007669"/>
    <property type="project" value="Ensembl"/>
</dbReference>
<dbReference type="GO" id="GO:0001996">
    <property type="term" value="P:positive regulation of heart rate by epinephrine-norepinephrine"/>
    <property type="evidence" value="ECO:0007669"/>
    <property type="project" value="Ensembl"/>
</dbReference>
<dbReference type="GO" id="GO:0043410">
    <property type="term" value="P:positive regulation of MAPK cascade"/>
    <property type="evidence" value="ECO:0000318"/>
    <property type="project" value="GO_Central"/>
</dbReference>
<dbReference type="GO" id="GO:0001997">
    <property type="term" value="P:positive regulation of the force of heart contraction by epinephrine-norepinephrine"/>
    <property type="evidence" value="ECO:0007669"/>
    <property type="project" value="Ensembl"/>
</dbReference>
<dbReference type="GO" id="GO:0045187">
    <property type="term" value="P:regulation of circadian sleep/wake cycle, sleep"/>
    <property type="evidence" value="ECO:0000250"/>
    <property type="project" value="UniProtKB"/>
</dbReference>
<dbReference type="GO" id="GO:0009409">
    <property type="term" value="P:response to cold"/>
    <property type="evidence" value="ECO:0007669"/>
    <property type="project" value="Ensembl"/>
</dbReference>
<dbReference type="CDD" id="cd15958">
    <property type="entry name" value="7tmA_Beta1_AR"/>
    <property type="match status" value="1"/>
</dbReference>
<dbReference type="FunFam" id="1.20.1070.10:FF:000057">
    <property type="entry name" value="Beta-1 adrenergic receptor"/>
    <property type="match status" value="1"/>
</dbReference>
<dbReference type="Gene3D" id="1.20.1070.10">
    <property type="entry name" value="Rhodopsin 7-helix transmembrane proteins"/>
    <property type="match status" value="1"/>
</dbReference>
<dbReference type="InterPro" id="IPR002233">
    <property type="entry name" value="ADR_fam"/>
</dbReference>
<dbReference type="InterPro" id="IPR000507">
    <property type="entry name" value="ADRB1_rcpt"/>
</dbReference>
<dbReference type="InterPro" id="IPR000276">
    <property type="entry name" value="GPCR_Rhodpsn"/>
</dbReference>
<dbReference type="InterPro" id="IPR017452">
    <property type="entry name" value="GPCR_Rhodpsn_7TM"/>
</dbReference>
<dbReference type="PANTHER" id="PTHR24248">
    <property type="entry name" value="ADRENERGIC RECEPTOR-RELATED G-PROTEIN COUPLED RECEPTOR"/>
    <property type="match status" value="1"/>
</dbReference>
<dbReference type="PANTHER" id="PTHR24248:SF54">
    <property type="entry name" value="BETA-1 ADRENERGIC RECEPTOR"/>
    <property type="match status" value="1"/>
</dbReference>
<dbReference type="Pfam" id="PF00001">
    <property type="entry name" value="7tm_1"/>
    <property type="match status" value="1"/>
</dbReference>
<dbReference type="PRINTS" id="PR01103">
    <property type="entry name" value="ADRENERGICR"/>
</dbReference>
<dbReference type="PRINTS" id="PR00561">
    <property type="entry name" value="ADRENRGCB1AR"/>
</dbReference>
<dbReference type="PRINTS" id="PR00237">
    <property type="entry name" value="GPCRRHODOPSN"/>
</dbReference>
<dbReference type="SMART" id="SM01381">
    <property type="entry name" value="7TM_GPCR_Srsx"/>
    <property type="match status" value="1"/>
</dbReference>
<dbReference type="SUPFAM" id="SSF81321">
    <property type="entry name" value="Family A G protein-coupled receptor-like"/>
    <property type="match status" value="1"/>
</dbReference>
<dbReference type="PROSITE" id="PS00237">
    <property type="entry name" value="G_PROTEIN_RECEP_F1_1"/>
    <property type="match status" value="1"/>
</dbReference>
<dbReference type="PROSITE" id="PS50262">
    <property type="entry name" value="G_PROTEIN_RECEP_F1_2"/>
    <property type="match status" value="1"/>
</dbReference>
<evidence type="ECO:0000250" key="1"/>
<evidence type="ECO:0000250" key="2">
    <source>
        <dbReference type="UniProtKB" id="P08588"/>
    </source>
</evidence>
<evidence type="ECO:0000250" key="3">
    <source>
        <dbReference type="UniProtKB" id="P18090"/>
    </source>
</evidence>
<evidence type="ECO:0000250" key="4">
    <source>
        <dbReference type="UniProtKB" id="P34971"/>
    </source>
</evidence>
<evidence type="ECO:0000255" key="5"/>
<evidence type="ECO:0000255" key="6">
    <source>
        <dbReference type="PROSITE-ProRule" id="PRU00521"/>
    </source>
</evidence>
<evidence type="ECO:0000256" key="7">
    <source>
        <dbReference type="SAM" id="MobiDB-lite"/>
    </source>
</evidence>
<evidence type="ECO:0000305" key="8"/>